<dbReference type="EMBL" id="BA000028">
    <property type="protein sequence ID" value="BAC14714.1"/>
    <property type="molecule type" value="Genomic_DNA"/>
</dbReference>
<dbReference type="RefSeq" id="WP_011067152.1">
    <property type="nucleotide sequence ID" value="NC_004193.1"/>
</dbReference>
<dbReference type="SMR" id="Q8CZD5"/>
<dbReference type="STRING" id="221109.gene:10735010"/>
<dbReference type="KEGG" id="oih:OB2758"/>
<dbReference type="eggNOG" id="COG2190">
    <property type="taxonomic scope" value="Bacteria"/>
</dbReference>
<dbReference type="HOGENOM" id="CLU_012312_5_1_9"/>
<dbReference type="OrthoDB" id="92465at2"/>
<dbReference type="PhylomeDB" id="Q8CZD5"/>
<dbReference type="Proteomes" id="UP000000822">
    <property type="component" value="Chromosome"/>
</dbReference>
<dbReference type="GO" id="GO:0005737">
    <property type="term" value="C:cytoplasm"/>
    <property type="evidence" value="ECO:0007669"/>
    <property type="project" value="UniProtKB-SubCell"/>
</dbReference>
<dbReference type="GO" id="GO:0016301">
    <property type="term" value="F:kinase activity"/>
    <property type="evidence" value="ECO:0007669"/>
    <property type="project" value="UniProtKB-KW"/>
</dbReference>
<dbReference type="GO" id="GO:0046872">
    <property type="term" value="F:metal ion binding"/>
    <property type="evidence" value="ECO:0007669"/>
    <property type="project" value="UniProtKB-KW"/>
</dbReference>
<dbReference type="GO" id="GO:0009401">
    <property type="term" value="P:phosphoenolpyruvate-dependent sugar phosphotransferase system"/>
    <property type="evidence" value="ECO:0007669"/>
    <property type="project" value="UniProtKB-KW"/>
</dbReference>
<dbReference type="FunFam" id="2.70.70.10:FF:000001">
    <property type="entry name" value="PTS system glucose-specific IIA component"/>
    <property type="match status" value="1"/>
</dbReference>
<dbReference type="Gene3D" id="2.70.70.10">
    <property type="entry name" value="Glucose Permease (Domain IIA)"/>
    <property type="match status" value="1"/>
</dbReference>
<dbReference type="InterPro" id="IPR011055">
    <property type="entry name" value="Dup_hybrid_motif"/>
</dbReference>
<dbReference type="InterPro" id="IPR001127">
    <property type="entry name" value="PTS_EIIA_1_perm"/>
</dbReference>
<dbReference type="InterPro" id="IPR050890">
    <property type="entry name" value="PTS_EIIA_component"/>
</dbReference>
<dbReference type="NCBIfam" id="TIGR00830">
    <property type="entry name" value="PTBA"/>
    <property type="match status" value="1"/>
</dbReference>
<dbReference type="PANTHER" id="PTHR45008">
    <property type="entry name" value="PTS SYSTEM GLUCOSE-SPECIFIC EIIA COMPONENT"/>
    <property type="match status" value="1"/>
</dbReference>
<dbReference type="PANTHER" id="PTHR45008:SF1">
    <property type="entry name" value="PTS SYSTEM GLUCOSE-SPECIFIC EIIA COMPONENT"/>
    <property type="match status" value="1"/>
</dbReference>
<dbReference type="Pfam" id="PF00358">
    <property type="entry name" value="PTS_EIIA_1"/>
    <property type="match status" value="1"/>
</dbReference>
<dbReference type="SUPFAM" id="SSF51261">
    <property type="entry name" value="Duplicated hybrid motif"/>
    <property type="match status" value="1"/>
</dbReference>
<dbReference type="PROSITE" id="PS51093">
    <property type="entry name" value="PTS_EIIA_TYPE_1"/>
    <property type="match status" value="1"/>
</dbReference>
<proteinExistence type="inferred from homology"/>
<sequence length="165" mass="17970">MFKNLFKIKEREPKEITVVAPITGEIIPLEEVPDPVFAQKMMGEGVAVKPANGEVISPVDGEVKLVFQTKHAIIVEAENNAEILIHIGLDTVNLEGEGFTAHVKDGDIVKVGDKLMSFDIATIEEKATSSITPIIISNTDNVREVKNIKVTEVTAGENQILQVIN</sequence>
<feature type="chain" id="PRO_0000186546" description="PTS system glucose-specific EIIA component">
    <location>
        <begin position="1"/>
        <end position="165"/>
    </location>
</feature>
<feature type="domain" description="PTS EIIA type-1" evidence="2">
    <location>
        <begin position="34"/>
        <end position="138"/>
    </location>
</feature>
<feature type="active site" description="Tele-phosphohistidine intermediate; for EIIA activity" evidence="1 2">
    <location>
        <position position="86"/>
    </location>
</feature>
<feature type="binding site" evidence="1">
    <location>
        <position position="71"/>
    </location>
    <ligand>
        <name>Zn(2+)</name>
        <dbReference type="ChEBI" id="CHEBI:29105"/>
        <note>ligand shared with glycerol kinase</note>
    </ligand>
</feature>
<feature type="binding site" evidence="1">
    <location>
        <position position="86"/>
    </location>
    <ligand>
        <name>Zn(2+)</name>
        <dbReference type="ChEBI" id="CHEBI:29105"/>
        <note>ligand shared with glycerol kinase</note>
    </ligand>
</feature>
<feature type="site" description="Important for phospho-donor activity" evidence="1">
    <location>
        <position position="71"/>
    </location>
</feature>
<feature type="modified residue" description="Phosphohistidine; by HPr" evidence="1">
    <location>
        <position position="86"/>
    </location>
</feature>
<gene>
    <name type="primary">crr</name>
    <name type="ordered locus">OB2758</name>
</gene>
<accession>Q8CZD5</accession>
<evidence type="ECO:0000250" key="1">
    <source>
        <dbReference type="UniProtKB" id="P69783"/>
    </source>
</evidence>
<evidence type="ECO:0000255" key="2">
    <source>
        <dbReference type="PROSITE-ProRule" id="PRU00416"/>
    </source>
</evidence>
<evidence type="ECO:0000305" key="3"/>
<comment type="function">
    <text evidence="1">The phosphoenolpyruvate-dependent sugar phosphotransferase system (sugar PTS), a major carbohydrate active transport system, catalyzes the phosphorylation of incoming sugar substrates concomitantly with their translocation across the cell membrane. The enzyme II complex composed of PtsG and Crr is involved in glucose transport.</text>
</comment>
<comment type="cofactor">
    <cofactor evidence="1">
        <name>Zn(2+)</name>
        <dbReference type="ChEBI" id="CHEBI:29105"/>
    </cofactor>
    <text evidence="1">Binds 1 zinc ion per glycerol kinase EIIA-Glc dimer. The zinc ion is important for dimerization.</text>
</comment>
<comment type="subunit">
    <text evidence="1">Heterodimer with glycerol kinase (glpk).</text>
</comment>
<comment type="subcellular location">
    <subcellularLocation>
        <location evidence="3">Cytoplasm</location>
    </subcellularLocation>
</comment>
<comment type="domain">
    <text evidence="2">The EIIA domain is phosphorylated by phospho-HPr on a histidyl residue. Then, it transfers the phosphoryl group to the EIIB domain.</text>
</comment>
<reference key="1">
    <citation type="journal article" date="2002" name="Nucleic Acids Res.">
        <title>Genome sequence of Oceanobacillus iheyensis isolated from the Iheya Ridge and its unexpected adaptive capabilities to extreme environments.</title>
        <authorList>
            <person name="Takami H."/>
            <person name="Takaki Y."/>
            <person name="Uchiyama I."/>
        </authorList>
    </citation>
    <scope>NUCLEOTIDE SEQUENCE [LARGE SCALE GENOMIC DNA]</scope>
    <source>
        <strain>DSM 14371 / CIP 107618 / JCM 11309 / KCTC 3954 / HTE831</strain>
    </source>
</reference>
<organism>
    <name type="scientific">Oceanobacillus iheyensis (strain DSM 14371 / CIP 107618 / JCM 11309 / KCTC 3954 / HTE831)</name>
    <dbReference type="NCBI Taxonomy" id="221109"/>
    <lineage>
        <taxon>Bacteria</taxon>
        <taxon>Bacillati</taxon>
        <taxon>Bacillota</taxon>
        <taxon>Bacilli</taxon>
        <taxon>Bacillales</taxon>
        <taxon>Bacillaceae</taxon>
        <taxon>Oceanobacillus</taxon>
    </lineage>
</organism>
<keyword id="KW-0963">Cytoplasm</keyword>
<keyword id="KW-0418">Kinase</keyword>
<keyword id="KW-0479">Metal-binding</keyword>
<keyword id="KW-0597">Phosphoprotein</keyword>
<keyword id="KW-0598">Phosphotransferase system</keyword>
<keyword id="KW-1185">Reference proteome</keyword>
<keyword id="KW-0762">Sugar transport</keyword>
<keyword id="KW-0808">Transferase</keyword>
<keyword id="KW-0813">Transport</keyword>
<keyword id="KW-0862">Zinc</keyword>
<protein>
    <recommendedName>
        <fullName evidence="1">PTS system glucose-specific EIIA component</fullName>
    </recommendedName>
    <alternativeName>
        <fullName evidence="1">EIIA-Glc</fullName>
    </alternativeName>
    <alternativeName>
        <fullName evidence="1">EIII-Glc</fullName>
    </alternativeName>
    <alternativeName>
        <fullName evidence="1">Glucose-specific phosphotransferase enzyme IIA component</fullName>
    </alternativeName>
</protein>
<name>PTGA_OCEIH</name>